<name>RK2_GUITH</name>
<dbReference type="EMBL" id="AF041468">
    <property type="protein sequence ID" value="AAC35706.1"/>
    <property type="molecule type" value="Genomic_DNA"/>
</dbReference>
<dbReference type="RefSeq" id="NP_050772.1">
    <property type="nucleotide sequence ID" value="NC_000926.1"/>
</dbReference>
<dbReference type="SMR" id="O46897"/>
<dbReference type="GeneID" id="857080"/>
<dbReference type="HOGENOM" id="CLU_036235_2_1_1"/>
<dbReference type="OMA" id="NQCWATI"/>
<dbReference type="GO" id="GO:0009507">
    <property type="term" value="C:chloroplast"/>
    <property type="evidence" value="ECO:0007669"/>
    <property type="project" value="UniProtKB-SubCell"/>
</dbReference>
<dbReference type="GO" id="GO:0005762">
    <property type="term" value="C:mitochondrial large ribosomal subunit"/>
    <property type="evidence" value="ECO:0007669"/>
    <property type="project" value="TreeGrafter"/>
</dbReference>
<dbReference type="GO" id="GO:0019843">
    <property type="term" value="F:rRNA binding"/>
    <property type="evidence" value="ECO:0007669"/>
    <property type="project" value="UniProtKB-UniRule"/>
</dbReference>
<dbReference type="GO" id="GO:0003735">
    <property type="term" value="F:structural constituent of ribosome"/>
    <property type="evidence" value="ECO:0007669"/>
    <property type="project" value="InterPro"/>
</dbReference>
<dbReference type="GO" id="GO:0016740">
    <property type="term" value="F:transferase activity"/>
    <property type="evidence" value="ECO:0007669"/>
    <property type="project" value="InterPro"/>
</dbReference>
<dbReference type="GO" id="GO:0032543">
    <property type="term" value="P:mitochondrial translation"/>
    <property type="evidence" value="ECO:0007669"/>
    <property type="project" value="TreeGrafter"/>
</dbReference>
<dbReference type="FunFam" id="2.30.30.30:FF:000001">
    <property type="entry name" value="50S ribosomal protein L2"/>
    <property type="match status" value="1"/>
</dbReference>
<dbReference type="FunFam" id="2.40.50.140:FF:000003">
    <property type="entry name" value="50S ribosomal protein L2"/>
    <property type="match status" value="1"/>
</dbReference>
<dbReference type="FunFam" id="4.10.950.10:FF:000001">
    <property type="entry name" value="50S ribosomal protein L2"/>
    <property type="match status" value="1"/>
</dbReference>
<dbReference type="Gene3D" id="2.30.30.30">
    <property type="match status" value="1"/>
</dbReference>
<dbReference type="Gene3D" id="2.40.50.140">
    <property type="entry name" value="Nucleic acid-binding proteins"/>
    <property type="match status" value="1"/>
</dbReference>
<dbReference type="Gene3D" id="4.10.950.10">
    <property type="entry name" value="Ribosomal protein L2, domain 3"/>
    <property type="match status" value="1"/>
</dbReference>
<dbReference type="HAMAP" id="MF_01320_B">
    <property type="entry name" value="Ribosomal_uL2_B"/>
    <property type="match status" value="1"/>
</dbReference>
<dbReference type="InterPro" id="IPR012340">
    <property type="entry name" value="NA-bd_OB-fold"/>
</dbReference>
<dbReference type="InterPro" id="IPR014722">
    <property type="entry name" value="Rib_uL2_dom2"/>
</dbReference>
<dbReference type="InterPro" id="IPR002171">
    <property type="entry name" value="Ribosomal_uL2"/>
</dbReference>
<dbReference type="InterPro" id="IPR005880">
    <property type="entry name" value="Ribosomal_uL2_bac/org-type"/>
</dbReference>
<dbReference type="InterPro" id="IPR022669">
    <property type="entry name" value="Ribosomal_uL2_C"/>
</dbReference>
<dbReference type="InterPro" id="IPR022671">
    <property type="entry name" value="Ribosomal_uL2_CS"/>
</dbReference>
<dbReference type="InterPro" id="IPR014726">
    <property type="entry name" value="Ribosomal_uL2_dom3"/>
</dbReference>
<dbReference type="InterPro" id="IPR022666">
    <property type="entry name" value="Ribosomal_uL2_RNA-bd_dom"/>
</dbReference>
<dbReference type="InterPro" id="IPR008991">
    <property type="entry name" value="Translation_prot_SH3-like_sf"/>
</dbReference>
<dbReference type="NCBIfam" id="TIGR01171">
    <property type="entry name" value="rplB_bact"/>
    <property type="match status" value="1"/>
</dbReference>
<dbReference type="PANTHER" id="PTHR13691:SF5">
    <property type="entry name" value="LARGE RIBOSOMAL SUBUNIT PROTEIN UL2M"/>
    <property type="match status" value="1"/>
</dbReference>
<dbReference type="PANTHER" id="PTHR13691">
    <property type="entry name" value="RIBOSOMAL PROTEIN L2"/>
    <property type="match status" value="1"/>
</dbReference>
<dbReference type="Pfam" id="PF00181">
    <property type="entry name" value="Ribosomal_L2"/>
    <property type="match status" value="1"/>
</dbReference>
<dbReference type="Pfam" id="PF03947">
    <property type="entry name" value="Ribosomal_L2_C"/>
    <property type="match status" value="1"/>
</dbReference>
<dbReference type="PIRSF" id="PIRSF002158">
    <property type="entry name" value="Ribosomal_L2"/>
    <property type="match status" value="1"/>
</dbReference>
<dbReference type="SMART" id="SM01383">
    <property type="entry name" value="Ribosomal_L2"/>
    <property type="match status" value="1"/>
</dbReference>
<dbReference type="SMART" id="SM01382">
    <property type="entry name" value="Ribosomal_L2_C"/>
    <property type="match status" value="1"/>
</dbReference>
<dbReference type="SUPFAM" id="SSF50249">
    <property type="entry name" value="Nucleic acid-binding proteins"/>
    <property type="match status" value="1"/>
</dbReference>
<dbReference type="SUPFAM" id="SSF50104">
    <property type="entry name" value="Translation proteins SH3-like domain"/>
    <property type="match status" value="1"/>
</dbReference>
<dbReference type="PROSITE" id="PS00467">
    <property type="entry name" value="RIBOSOMAL_L2"/>
    <property type="match status" value="1"/>
</dbReference>
<keyword id="KW-0150">Chloroplast</keyword>
<keyword id="KW-0934">Plastid</keyword>
<keyword id="KW-0687">Ribonucleoprotein</keyword>
<keyword id="KW-0689">Ribosomal protein</keyword>
<gene>
    <name type="primary">rpl2</name>
</gene>
<proteinExistence type="inferred from homology"/>
<reference key="1">
    <citation type="journal article" date="1997" name="Biochem. Mol. Biol. Int.">
        <title>The large ribosomal protein gene cluster of a cryptomonad plastid: gene organization, sequence and evolutionary implications.</title>
        <authorList>
            <person name="Wang S.L."/>
            <person name="Liu X.-Q."/>
            <person name="Douglas S.E."/>
        </authorList>
    </citation>
    <scope>NUCLEOTIDE SEQUENCE [GENOMIC DNA]</scope>
</reference>
<reference key="2">
    <citation type="journal article" date="1999" name="J. Mol. Evol.">
        <title>The plastid genome of the cryptophyte alga, Guillardia theta: complete sequence and conserved synteny groups confirm its common ancestry with red algae.</title>
        <authorList>
            <person name="Douglas S.E."/>
            <person name="Penny S.L."/>
        </authorList>
    </citation>
    <scope>NUCLEOTIDE SEQUENCE [LARGE SCALE GENOMIC DNA]</scope>
</reference>
<evidence type="ECO:0000250" key="1"/>
<evidence type="ECO:0000255" key="2">
    <source>
        <dbReference type="HAMAP-Rule" id="MF_01320"/>
    </source>
</evidence>
<evidence type="ECO:0000256" key="3">
    <source>
        <dbReference type="SAM" id="MobiDB-lite"/>
    </source>
</evidence>
<evidence type="ECO:0000305" key="4"/>
<protein>
    <recommendedName>
        <fullName evidence="2">Large ribosomal subunit protein uL2c</fullName>
    </recommendedName>
    <alternativeName>
        <fullName evidence="4">50S ribosomal protein L2, chloroplastic</fullName>
    </alternativeName>
</protein>
<organism>
    <name type="scientific">Guillardia theta</name>
    <name type="common">Cryptophyte</name>
    <name type="synonym">Cryptomonas phi</name>
    <dbReference type="NCBI Taxonomy" id="55529"/>
    <lineage>
        <taxon>Eukaryota</taxon>
        <taxon>Cryptophyceae</taxon>
        <taxon>Pyrenomonadales</taxon>
        <taxon>Geminigeraceae</taxon>
        <taxon>Guillardia</taxon>
    </lineage>
</organism>
<geneLocation type="chloroplast"/>
<sequence length="275" mass="30468">MGIRIYKSYTPGTRNRSSSDFVEITKSKPEKSLLRKKLSCAGRNNRGLITVRHKGGGHKQRYRLVDFKRNKLDIPAIVASVEYDPNRNARIALLHYQDGEKRYILHPKKLAVGDKIYSGINVPIEIGNAMPLYNVPLGTAVHNVELIPGRGGQIVRSAGTSAQVVAKDGQVVTIKMPSNEVRMIYKNCYATIGEVGNADIKNIRLGKAGRKRWLGIRPSVRGVVMNPCDHPHGGGEGRSPIGRAKPVTPWGKPALGVKTRRQNKYSDFCIIRSRN</sequence>
<comment type="subunit">
    <text evidence="1">Part of the 50S ribosomal subunit.</text>
</comment>
<comment type="subcellular location">
    <subcellularLocation>
        <location>Plastid</location>
        <location>Chloroplast</location>
    </subcellularLocation>
</comment>
<comment type="similarity">
    <text evidence="4">Belongs to the universal ribosomal protein uL2 family.</text>
</comment>
<accession>O46897</accession>
<feature type="chain" id="PRO_0000129677" description="Large ribosomal subunit protein uL2c">
    <location>
        <begin position="1"/>
        <end position="275"/>
    </location>
</feature>
<feature type="region of interest" description="Disordered" evidence="3">
    <location>
        <begin position="225"/>
        <end position="252"/>
    </location>
</feature>